<dbReference type="EMBL" id="CP000712">
    <property type="protein sequence ID" value="ABQ77922.1"/>
    <property type="molecule type" value="Genomic_DNA"/>
</dbReference>
<dbReference type="SMR" id="A5W1B2"/>
<dbReference type="KEGG" id="ppf:Pput_1766"/>
<dbReference type="eggNOG" id="COG0322">
    <property type="taxonomic scope" value="Bacteria"/>
</dbReference>
<dbReference type="HOGENOM" id="CLU_014841_3_0_6"/>
<dbReference type="GO" id="GO:0005737">
    <property type="term" value="C:cytoplasm"/>
    <property type="evidence" value="ECO:0007669"/>
    <property type="project" value="UniProtKB-SubCell"/>
</dbReference>
<dbReference type="GO" id="GO:0009380">
    <property type="term" value="C:excinuclease repair complex"/>
    <property type="evidence" value="ECO:0007669"/>
    <property type="project" value="InterPro"/>
</dbReference>
<dbReference type="GO" id="GO:0003677">
    <property type="term" value="F:DNA binding"/>
    <property type="evidence" value="ECO:0007669"/>
    <property type="project" value="UniProtKB-UniRule"/>
</dbReference>
<dbReference type="GO" id="GO:0009381">
    <property type="term" value="F:excinuclease ABC activity"/>
    <property type="evidence" value="ECO:0007669"/>
    <property type="project" value="UniProtKB-UniRule"/>
</dbReference>
<dbReference type="GO" id="GO:0006289">
    <property type="term" value="P:nucleotide-excision repair"/>
    <property type="evidence" value="ECO:0007669"/>
    <property type="project" value="UniProtKB-UniRule"/>
</dbReference>
<dbReference type="GO" id="GO:0009432">
    <property type="term" value="P:SOS response"/>
    <property type="evidence" value="ECO:0007669"/>
    <property type="project" value="UniProtKB-UniRule"/>
</dbReference>
<dbReference type="CDD" id="cd10434">
    <property type="entry name" value="GIY-YIG_UvrC_Cho"/>
    <property type="match status" value="1"/>
</dbReference>
<dbReference type="FunFam" id="1.10.150.20:FF:000005">
    <property type="entry name" value="UvrABC system protein C"/>
    <property type="match status" value="1"/>
</dbReference>
<dbReference type="FunFam" id="3.30.420.340:FF:000001">
    <property type="entry name" value="UvrABC system protein C"/>
    <property type="match status" value="1"/>
</dbReference>
<dbReference type="FunFam" id="3.40.1440.10:FF:000001">
    <property type="entry name" value="UvrABC system protein C"/>
    <property type="match status" value="1"/>
</dbReference>
<dbReference type="Gene3D" id="1.10.150.20">
    <property type="entry name" value="5' to 3' exonuclease, C-terminal subdomain"/>
    <property type="match status" value="1"/>
</dbReference>
<dbReference type="Gene3D" id="3.40.1440.10">
    <property type="entry name" value="GIY-YIG endonuclease"/>
    <property type="match status" value="1"/>
</dbReference>
<dbReference type="Gene3D" id="4.10.860.10">
    <property type="entry name" value="UVR domain"/>
    <property type="match status" value="1"/>
</dbReference>
<dbReference type="Gene3D" id="3.30.420.340">
    <property type="entry name" value="UvrC, RNAse H endonuclease domain"/>
    <property type="match status" value="1"/>
</dbReference>
<dbReference type="HAMAP" id="MF_00203">
    <property type="entry name" value="UvrC"/>
    <property type="match status" value="1"/>
</dbReference>
<dbReference type="InterPro" id="IPR000305">
    <property type="entry name" value="GIY-YIG_endonuc"/>
</dbReference>
<dbReference type="InterPro" id="IPR035901">
    <property type="entry name" value="GIY-YIG_endonuc_sf"/>
</dbReference>
<dbReference type="InterPro" id="IPR047296">
    <property type="entry name" value="GIY-YIG_UvrC_Cho"/>
</dbReference>
<dbReference type="InterPro" id="IPR003583">
    <property type="entry name" value="Hlx-hairpin-Hlx_DNA-bd_motif"/>
</dbReference>
<dbReference type="InterPro" id="IPR010994">
    <property type="entry name" value="RuvA_2-like"/>
</dbReference>
<dbReference type="InterPro" id="IPR001943">
    <property type="entry name" value="UVR_dom"/>
</dbReference>
<dbReference type="InterPro" id="IPR036876">
    <property type="entry name" value="UVR_dom_sf"/>
</dbReference>
<dbReference type="InterPro" id="IPR050066">
    <property type="entry name" value="UvrABC_protein_C"/>
</dbReference>
<dbReference type="InterPro" id="IPR004791">
    <property type="entry name" value="UvrC"/>
</dbReference>
<dbReference type="InterPro" id="IPR001162">
    <property type="entry name" value="UvrC_RNase_H_dom"/>
</dbReference>
<dbReference type="InterPro" id="IPR038476">
    <property type="entry name" value="UvrC_RNase_H_dom_sf"/>
</dbReference>
<dbReference type="NCBIfam" id="NF001824">
    <property type="entry name" value="PRK00558.1-5"/>
    <property type="match status" value="1"/>
</dbReference>
<dbReference type="NCBIfam" id="TIGR00194">
    <property type="entry name" value="uvrC"/>
    <property type="match status" value="1"/>
</dbReference>
<dbReference type="PANTHER" id="PTHR30562:SF1">
    <property type="entry name" value="UVRABC SYSTEM PROTEIN C"/>
    <property type="match status" value="1"/>
</dbReference>
<dbReference type="PANTHER" id="PTHR30562">
    <property type="entry name" value="UVRC/OXIDOREDUCTASE"/>
    <property type="match status" value="1"/>
</dbReference>
<dbReference type="Pfam" id="PF01541">
    <property type="entry name" value="GIY-YIG"/>
    <property type="match status" value="1"/>
</dbReference>
<dbReference type="Pfam" id="PF14520">
    <property type="entry name" value="HHH_5"/>
    <property type="match status" value="1"/>
</dbReference>
<dbReference type="Pfam" id="PF02151">
    <property type="entry name" value="UVR"/>
    <property type="match status" value="1"/>
</dbReference>
<dbReference type="Pfam" id="PF22920">
    <property type="entry name" value="UvrC_RNaseH"/>
    <property type="match status" value="1"/>
</dbReference>
<dbReference type="Pfam" id="PF08459">
    <property type="entry name" value="UvrC_RNaseH_dom"/>
    <property type="match status" value="1"/>
</dbReference>
<dbReference type="SMART" id="SM00465">
    <property type="entry name" value="GIYc"/>
    <property type="match status" value="1"/>
</dbReference>
<dbReference type="SMART" id="SM00278">
    <property type="entry name" value="HhH1"/>
    <property type="match status" value="2"/>
</dbReference>
<dbReference type="SUPFAM" id="SSF46600">
    <property type="entry name" value="C-terminal UvrC-binding domain of UvrB"/>
    <property type="match status" value="1"/>
</dbReference>
<dbReference type="SUPFAM" id="SSF82771">
    <property type="entry name" value="GIY-YIG endonuclease"/>
    <property type="match status" value="1"/>
</dbReference>
<dbReference type="SUPFAM" id="SSF47781">
    <property type="entry name" value="RuvA domain 2-like"/>
    <property type="match status" value="1"/>
</dbReference>
<dbReference type="PROSITE" id="PS50164">
    <property type="entry name" value="GIY_YIG"/>
    <property type="match status" value="1"/>
</dbReference>
<dbReference type="PROSITE" id="PS50151">
    <property type="entry name" value="UVR"/>
    <property type="match status" value="1"/>
</dbReference>
<dbReference type="PROSITE" id="PS50165">
    <property type="entry name" value="UVRC"/>
    <property type="match status" value="1"/>
</dbReference>
<proteinExistence type="inferred from homology"/>
<organism>
    <name type="scientific">Pseudomonas putida (strain ATCC 700007 / DSM 6899 / JCM 31910 / BCRC 17059 / LMG 24140 / F1)</name>
    <dbReference type="NCBI Taxonomy" id="351746"/>
    <lineage>
        <taxon>Bacteria</taxon>
        <taxon>Pseudomonadati</taxon>
        <taxon>Pseudomonadota</taxon>
        <taxon>Gammaproteobacteria</taxon>
        <taxon>Pseudomonadales</taxon>
        <taxon>Pseudomonadaceae</taxon>
        <taxon>Pseudomonas</taxon>
    </lineage>
</organism>
<accession>A5W1B2</accession>
<comment type="function">
    <text evidence="1">The UvrABC repair system catalyzes the recognition and processing of DNA lesions. UvrC both incises the 5' and 3' sides of the lesion. The N-terminal half is responsible for the 3' incision and the C-terminal half is responsible for the 5' incision.</text>
</comment>
<comment type="subunit">
    <text evidence="1">Interacts with UvrB in an incision complex.</text>
</comment>
<comment type="subcellular location">
    <subcellularLocation>
        <location evidence="1">Cytoplasm</location>
    </subcellularLocation>
</comment>
<comment type="similarity">
    <text evidence="1">Belongs to the UvrC family.</text>
</comment>
<keyword id="KW-0963">Cytoplasm</keyword>
<keyword id="KW-0227">DNA damage</keyword>
<keyword id="KW-0228">DNA excision</keyword>
<keyword id="KW-0234">DNA repair</keyword>
<keyword id="KW-0267">Excision nuclease</keyword>
<keyword id="KW-0742">SOS response</keyword>
<evidence type="ECO:0000255" key="1">
    <source>
        <dbReference type="HAMAP-Rule" id="MF_00203"/>
    </source>
</evidence>
<reference key="1">
    <citation type="submission" date="2007-05" db="EMBL/GenBank/DDBJ databases">
        <title>Complete sequence of Pseudomonas putida F1.</title>
        <authorList>
            <consortium name="US DOE Joint Genome Institute"/>
            <person name="Copeland A."/>
            <person name="Lucas S."/>
            <person name="Lapidus A."/>
            <person name="Barry K."/>
            <person name="Detter J.C."/>
            <person name="Glavina del Rio T."/>
            <person name="Hammon N."/>
            <person name="Israni S."/>
            <person name="Dalin E."/>
            <person name="Tice H."/>
            <person name="Pitluck S."/>
            <person name="Chain P."/>
            <person name="Malfatti S."/>
            <person name="Shin M."/>
            <person name="Vergez L."/>
            <person name="Schmutz J."/>
            <person name="Larimer F."/>
            <person name="Land M."/>
            <person name="Hauser L."/>
            <person name="Kyrpides N."/>
            <person name="Lykidis A."/>
            <person name="Parales R."/>
            <person name="Richardson P."/>
        </authorList>
    </citation>
    <scope>NUCLEOTIDE SEQUENCE [LARGE SCALE GENOMIC DNA]</scope>
    <source>
        <strain>ATCC 700007 / DSM 6899 / JCM 31910 / BCRC 17059 / LMG 24140 / F1</strain>
    </source>
</reference>
<name>UVRC_PSEP1</name>
<feature type="chain" id="PRO_1000077822" description="UvrABC system protein C">
    <location>
        <begin position="1"/>
        <end position="607"/>
    </location>
</feature>
<feature type="domain" description="GIY-YIG" evidence="1">
    <location>
        <begin position="16"/>
        <end position="94"/>
    </location>
</feature>
<feature type="domain" description="UVR" evidence="1">
    <location>
        <begin position="203"/>
        <end position="238"/>
    </location>
</feature>
<gene>
    <name evidence="1" type="primary">uvrC</name>
    <name type="ordered locus">Pput_1766</name>
</gene>
<protein>
    <recommendedName>
        <fullName evidence="1">UvrABC system protein C</fullName>
        <shortName evidence="1">Protein UvrC</shortName>
    </recommendedName>
    <alternativeName>
        <fullName evidence="1">Excinuclease ABC subunit C</fullName>
    </alternativeName>
</protein>
<sequence>MSQVFDASAFLATCSGRPGVYRMFDGEARLLYVGKAKNLKKRLASYFRKAGLAPKTAALVARIAQVETTITANETEALLLEQNLIKEWRPPYNILLRDDKSYPYVFLSDGEFPRLGIHRGAKKAKGRYFGPYPSAGAIRESLSLLQKAFSVRQCEDSYYANRTRPCLQYQIKRCKGPCTDLVTAEEYAEDVRHSVMFLEGRSQQLGNELNAEMEKAAMALDFEKAAELRDQIALLRRVQDQQYIEGGSGDVDVIAAFVNPGGACVHLISVRGGRVLGSKNFFPQVGIEEEVAEVMAAFLSQYYLGNAERELPGELIVNVVHEDFNAITEALHTLRGRELTISHRVRGTRARWQQLAVTNAEQALNARLANRQHMAARFEALAEVLGLDEVPQRLECYDISHSSGEATVASCVVFGPEGPIKSDYRRFNIEGVTAGDDYAAMHQALTRRYGRIKDGEGKLPDVLLVDGGKGQLNMARDVMQALGFTDLTLLGVAKGVTRKAGFETLYLNDVHHEFTLKGDSSALHLIQQIRDEAHRFAITGHRARRGKARRVSSLEDVAGVGPKRRRDLLKHFGGLQELNRASIDEIAKAPGISKKLAESIYASLHSE</sequence>